<organism>
    <name type="scientific">Halalkalibacterium halodurans (strain ATCC BAA-125 / DSM 18197 / FERM 7344 / JCM 9153 / C-125)</name>
    <name type="common">Bacillus halodurans</name>
    <dbReference type="NCBI Taxonomy" id="272558"/>
    <lineage>
        <taxon>Bacteria</taxon>
        <taxon>Bacillati</taxon>
        <taxon>Bacillota</taxon>
        <taxon>Bacilli</taxon>
        <taxon>Bacillales</taxon>
        <taxon>Bacillaceae</taxon>
        <taxon>Halalkalibacterium (ex Joshi et al. 2022)</taxon>
    </lineage>
</organism>
<proteinExistence type="inferred from homology"/>
<feature type="chain" id="PRO_0000172859" description="Uncharacterized protein BH0965">
    <location>
        <begin position="1"/>
        <end position="135"/>
    </location>
</feature>
<feature type="transmembrane region" description="Helical" evidence="1">
    <location>
        <begin position="7"/>
        <end position="25"/>
    </location>
</feature>
<feature type="transmembrane region" description="Helical" evidence="1">
    <location>
        <begin position="29"/>
        <end position="51"/>
    </location>
</feature>
<feature type="transmembrane region" description="Helical" evidence="1">
    <location>
        <begin position="64"/>
        <end position="85"/>
    </location>
</feature>
<feature type="transmembrane region" description="Helical" evidence="1">
    <location>
        <begin position="89"/>
        <end position="108"/>
    </location>
</feature>
<accession>Q9KE91</accession>
<protein>
    <recommendedName>
        <fullName>Uncharacterized protein BH0965</fullName>
    </recommendedName>
</protein>
<reference key="1">
    <citation type="journal article" date="2000" name="Nucleic Acids Res.">
        <title>Complete genome sequence of the alkaliphilic bacterium Bacillus halodurans and genomic sequence comparison with Bacillus subtilis.</title>
        <authorList>
            <person name="Takami H."/>
            <person name="Nakasone K."/>
            <person name="Takaki Y."/>
            <person name="Maeno G."/>
            <person name="Sasaki R."/>
            <person name="Masui N."/>
            <person name="Fuji F."/>
            <person name="Hirama C."/>
            <person name="Nakamura Y."/>
            <person name="Ogasawara N."/>
            <person name="Kuhara S."/>
            <person name="Horikoshi K."/>
        </authorList>
    </citation>
    <scope>NUCLEOTIDE SEQUENCE [LARGE SCALE GENOMIC DNA]</scope>
    <source>
        <strain>ATCC BAA-125 / DSM 18197 / FERM 7344 / JCM 9153 / C-125</strain>
    </source>
</reference>
<keyword id="KW-1003">Cell membrane</keyword>
<keyword id="KW-0472">Membrane</keyword>
<keyword id="KW-1185">Reference proteome</keyword>
<keyword id="KW-0812">Transmembrane</keyword>
<keyword id="KW-1133">Transmembrane helix</keyword>
<dbReference type="EMBL" id="BA000004">
    <property type="protein sequence ID" value="BAB04684.1"/>
    <property type="molecule type" value="Genomic_DNA"/>
</dbReference>
<dbReference type="PIR" id="E83770">
    <property type="entry name" value="E83770"/>
</dbReference>
<dbReference type="RefSeq" id="WP_010897137.1">
    <property type="nucleotide sequence ID" value="NC_002570.2"/>
</dbReference>
<dbReference type="STRING" id="272558.gene:10726858"/>
<dbReference type="GeneID" id="87596532"/>
<dbReference type="KEGG" id="bha:BH0965"/>
<dbReference type="eggNOG" id="COG4824">
    <property type="taxonomic scope" value="Bacteria"/>
</dbReference>
<dbReference type="HOGENOM" id="CLU_125939_3_2_9"/>
<dbReference type="OrthoDB" id="88184at2"/>
<dbReference type="Proteomes" id="UP000001258">
    <property type="component" value="Chromosome"/>
</dbReference>
<dbReference type="GO" id="GO:0005886">
    <property type="term" value="C:plasma membrane"/>
    <property type="evidence" value="ECO:0007669"/>
    <property type="project" value="UniProtKB-SubCell"/>
</dbReference>
<dbReference type="InterPro" id="IPR006480">
    <property type="entry name" value="Phage_holin_4_1"/>
</dbReference>
<dbReference type="NCBIfam" id="TIGR01593">
    <property type="entry name" value="holin_tox_secr"/>
    <property type="match status" value="1"/>
</dbReference>
<dbReference type="Pfam" id="PF05105">
    <property type="entry name" value="Phage_holin_4_1"/>
    <property type="match status" value="1"/>
</dbReference>
<evidence type="ECO:0000255" key="1"/>
<evidence type="ECO:0000305" key="2"/>
<name>Y965_HALH5</name>
<sequence>MEALLKWSAAVLAAAVSFLYGEWTILLSILLTLVVIDYGTGLVAAGVTGNINSRVGLIGITRKVFIFVMVAIAHMIDTVLLEVGIETEALIFMAAVVFYIVNELISIFENAGRMGLPVPKQLKQAISILKGDESK</sequence>
<gene>
    <name type="ordered locus">BH0965</name>
</gene>
<comment type="subcellular location">
    <subcellularLocation>
        <location evidence="2">Cell membrane</location>
        <topology evidence="2">Multi-pass membrane protein</topology>
    </subcellularLocation>
</comment>
<comment type="similarity">
    <text evidence="2">Belongs to the bacteriophage holin family. Cp-1 holin subfamily.</text>
</comment>